<evidence type="ECO:0000255" key="1">
    <source>
        <dbReference type="HAMAP-Rule" id="MF_00633"/>
    </source>
</evidence>
<organism>
    <name type="scientific">Gossypium barbadense</name>
    <name type="common">Sea Island cotton</name>
    <name type="synonym">Hibiscus barbadensis</name>
    <dbReference type="NCBI Taxonomy" id="3634"/>
    <lineage>
        <taxon>Eukaryota</taxon>
        <taxon>Viridiplantae</taxon>
        <taxon>Streptophyta</taxon>
        <taxon>Embryophyta</taxon>
        <taxon>Tracheophyta</taxon>
        <taxon>Spermatophyta</taxon>
        <taxon>Magnoliopsida</taxon>
        <taxon>eudicotyledons</taxon>
        <taxon>Gunneridae</taxon>
        <taxon>Pentapetalae</taxon>
        <taxon>rosids</taxon>
        <taxon>malvids</taxon>
        <taxon>Malvales</taxon>
        <taxon>Malvaceae</taxon>
        <taxon>Malvoideae</taxon>
        <taxon>Gossypium</taxon>
    </lineage>
</organism>
<keyword id="KW-0150">Chloroplast</keyword>
<keyword id="KW-0249">Electron transport</keyword>
<keyword id="KW-0349">Heme</keyword>
<keyword id="KW-0408">Iron</keyword>
<keyword id="KW-0472">Membrane</keyword>
<keyword id="KW-0479">Metal-binding</keyword>
<keyword id="KW-0602">Photosynthesis</keyword>
<keyword id="KW-0934">Plastid</keyword>
<keyword id="KW-0793">Thylakoid</keyword>
<keyword id="KW-0812">Transmembrane</keyword>
<keyword id="KW-1133">Transmembrane helix</keyword>
<keyword id="KW-0813">Transport</keyword>
<comment type="function">
    <text evidence="1">Component of the cytochrome b6-f complex, which mediates electron transfer between photosystem II (PSII) and photosystem I (PSI), cyclic electron flow around PSI, and state transitions.</text>
</comment>
<comment type="cofactor">
    <cofactor evidence="1">
        <name>heme b</name>
        <dbReference type="ChEBI" id="CHEBI:60344"/>
    </cofactor>
    <text evidence="1">Binds 2 heme b groups non-covalently with two histidine residues as axial ligands.</text>
</comment>
<comment type="cofactor">
    <cofactor evidence="1">
        <name>heme c</name>
        <dbReference type="ChEBI" id="CHEBI:61717"/>
    </cofactor>
    <text evidence="1">Binds one heme group covalently by a single cysteine link with no axial amino acid ligand. This heme was named heme ci.</text>
</comment>
<comment type="subunit">
    <text evidence="1">The 4 large subunits of the cytochrome b6-f complex are cytochrome b6, subunit IV (17 kDa polypeptide, PetD), cytochrome f and the Rieske protein, while the 4 small subunits are PetG, PetL, PetM and PetN. The complex functions as a dimer.</text>
</comment>
<comment type="subcellular location">
    <subcellularLocation>
        <location evidence="1">Plastid</location>
        <location evidence="1">Chloroplast thylakoid membrane</location>
        <topology evidence="1">Multi-pass membrane protein</topology>
    </subcellularLocation>
</comment>
<comment type="miscellaneous">
    <text evidence="1">Heme 1 (or BH or b566) is high-potential and absorbs at about 566 nm, and heme 2 (or BL or b562) is low-potential and absorbs at about 562 nm.</text>
</comment>
<comment type="similarity">
    <text evidence="1">Belongs to the cytochrome b family. PetB subfamily.</text>
</comment>
<name>CYB6_GOSBA</name>
<geneLocation type="chloroplast"/>
<feature type="chain" id="PRO_0000275317" description="Cytochrome b6">
    <location>
        <begin position="1"/>
        <end position="215"/>
    </location>
</feature>
<feature type="transmembrane region" description="Helical" evidence="1">
    <location>
        <begin position="32"/>
        <end position="52"/>
    </location>
</feature>
<feature type="transmembrane region" description="Helical" evidence="1">
    <location>
        <begin position="90"/>
        <end position="110"/>
    </location>
</feature>
<feature type="transmembrane region" description="Helical" evidence="1">
    <location>
        <begin position="116"/>
        <end position="136"/>
    </location>
</feature>
<feature type="transmembrane region" description="Helical" evidence="1">
    <location>
        <begin position="186"/>
        <end position="206"/>
    </location>
</feature>
<feature type="binding site" description="covalent" evidence="1">
    <location>
        <position position="35"/>
    </location>
    <ligand>
        <name>heme c</name>
        <dbReference type="ChEBI" id="CHEBI:61717"/>
    </ligand>
</feature>
<feature type="binding site" description="axial binding residue" evidence="1">
    <location>
        <position position="86"/>
    </location>
    <ligand>
        <name>heme b</name>
        <dbReference type="ChEBI" id="CHEBI:60344"/>
        <label>2</label>
    </ligand>
    <ligandPart>
        <name>Fe</name>
        <dbReference type="ChEBI" id="CHEBI:18248"/>
    </ligandPart>
</feature>
<feature type="binding site" description="axial binding residue" evidence="1">
    <location>
        <position position="100"/>
    </location>
    <ligand>
        <name>heme b</name>
        <dbReference type="ChEBI" id="CHEBI:60344"/>
        <label>1</label>
    </ligand>
    <ligandPart>
        <name>Fe</name>
        <dbReference type="ChEBI" id="CHEBI:18248"/>
    </ligandPart>
</feature>
<feature type="binding site" description="axial binding residue" evidence="1">
    <location>
        <position position="187"/>
    </location>
    <ligand>
        <name>heme b</name>
        <dbReference type="ChEBI" id="CHEBI:60344"/>
        <label>2</label>
    </ligand>
    <ligandPart>
        <name>Fe</name>
        <dbReference type="ChEBI" id="CHEBI:18248"/>
    </ligandPart>
</feature>
<feature type="binding site" description="axial binding residue" evidence="1">
    <location>
        <position position="202"/>
    </location>
    <ligand>
        <name>heme b</name>
        <dbReference type="ChEBI" id="CHEBI:60344"/>
        <label>1</label>
    </ligand>
    <ligandPart>
        <name>Fe</name>
        <dbReference type="ChEBI" id="CHEBI:18248"/>
    </ligandPart>
</feature>
<sequence>MSKVYDWFEERLEIQAIADDITSKYVPPHVNIFYCLGGITLTCFLVQVATGFAMTFYYRPTVTEAFASVQYIMTEANFGWLIRSVHRWSASMMVLMMILHVFRVYLTGGFKKPRELTWVTGVVLGVLTASFGVTGYSLPRDQIGYWAVKIVTGVPEAIPVIGSPLVELLRGSASVGQSTLTRFYSLHTFVLPLLTAVFMLMHFLMIRKQGISGPL</sequence>
<reference key="1">
    <citation type="journal article" date="2006" name="Genes Genet. Syst.">
        <title>Complete nucleotide sequence of the cotton (Gossypium barbadense L.) chloroplast genome with a comparative analysis of sequences among 9 dicot plants.</title>
        <authorList>
            <person name="Ibrahim R.I.H."/>
            <person name="Azuma J."/>
            <person name="Sakamoto M."/>
        </authorList>
    </citation>
    <scope>NUCLEOTIDE SEQUENCE [LARGE SCALE GENOMIC DNA]</scope>
</reference>
<dbReference type="EMBL" id="AP009123">
    <property type="protein sequence ID" value="BAF41277.1"/>
    <property type="molecule type" value="Genomic_DNA"/>
</dbReference>
<dbReference type="RefSeq" id="YP_913217.1">
    <property type="nucleotide sequence ID" value="NC_008641.1"/>
</dbReference>
<dbReference type="SMR" id="A0ZZ65"/>
<dbReference type="GeneID" id="4575206"/>
<dbReference type="GO" id="GO:0009535">
    <property type="term" value="C:chloroplast thylakoid membrane"/>
    <property type="evidence" value="ECO:0007669"/>
    <property type="project" value="UniProtKB-SubCell"/>
</dbReference>
<dbReference type="GO" id="GO:0045158">
    <property type="term" value="F:electron transporter, transferring electrons within cytochrome b6/f complex of photosystem II activity"/>
    <property type="evidence" value="ECO:0007669"/>
    <property type="project" value="UniProtKB-UniRule"/>
</dbReference>
<dbReference type="GO" id="GO:0046872">
    <property type="term" value="F:metal ion binding"/>
    <property type="evidence" value="ECO:0007669"/>
    <property type="project" value="UniProtKB-KW"/>
</dbReference>
<dbReference type="GO" id="GO:0016491">
    <property type="term" value="F:oxidoreductase activity"/>
    <property type="evidence" value="ECO:0007669"/>
    <property type="project" value="InterPro"/>
</dbReference>
<dbReference type="GO" id="GO:0015979">
    <property type="term" value="P:photosynthesis"/>
    <property type="evidence" value="ECO:0007669"/>
    <property type="project" value="UniProtKB-UniRule"/>
</dbReference>
<dbReference type="GO" id="GO:0022904">
    <property type="term" value="P:respiratory electron transport chain"/>
    <property type="evidence" value="ECO:0007669"/>
    <property type="project" value="InterPro"/>
</dbReference>
<dbReference type="CDD" id="cd00284">
    <property type="entry name" value="Cytochrome_b_N"/>
    <property type="match status" value="1"/>
</dbReference>
<dbReference type="FunFam" id="1.20.810.10:FF:000001">
    <property type="entry name" value="Cytochrome b6"/>
    <property type="match status" value="1"/>
</dbReference>
<dbReference type="Gene3D" id="1.20.810.10">
    <property type="entry name" value="Cytochrome Bc1 Complex, Chain C"/>
    <property type="match status" value="1"/>
</dbReference>
<dbReference type="HAMAP" id="MF_00633">
    <property type="entry name" value="Cytb6_f_cytb6"/>
    <property type="match status" value="1"/>
</dbReference>
<dbReference type="InterPro" id="IPR005797">
    <property type="entry name" value="Cyt_b/b6_N"/>
</dbReference>
<dbReference type="InterPro" id="IPR023530">
    <property type="entry name" value="Cyt_B6_PetB"/>
</dbReference>
<dbReference type="InterPro" id="IPR027387">
    <property type="entry name" value="Cytb/b6-like_sf"/>
</dbReference>
<dbReference type="InterPro" id="IPR048259">
    <property type="entry name" value="Cytochrome_b_N_euk/bac"/>
</dbReference>
<dbReference type="InterPro" id="IPR016174">
    <property type="entry name" value="Di-haem_cyt_TM"/>
</dbReference>
<dbReference type="NCBIfam" id="NF002990">
    <property type="entry name" value="PRK03735.1"/>
    <property type="match status" value="1"/>
</dbReference>
<dbReference type="PANTHER" id="PTHR19271">
    <property type="entry name" value="CYTOCHROME B"/>
    <property type="match status" value="1"/>
</dbReference>
<dbReference type="PANTHER" id="PTHR19271:SF16">
    <property type="entry name" value="CYTOCHROME B"/>
    <property type="match status" value="1"/>
</dbReference>
<dbReference type="Pfam" id="PF00033">
    <property type="entry name" value="Cytochrome_B"/>
    <property type="match status" value="1"/>
</dbReference>
<dbReference type="PIRSF" id="PIRSF000032">
    <property type="entry name" value="Cytochrome_b6"/>
    <property type="match status" value="1"/>
</dbReference>
<dbReference type="SUPFAM" id="SSF81342">
    <property type="entry name" value="Transmembrane di-heme cytochromes"/>
    <property type="match status" value="1"/>
</dbReference>
<dbReference type="PROSITE" id="PS51002">
    <property type="entry name" value="CYTB_NTER"/>
    <property type="match status" value="1"/>
</dbReference>
<protein>
    <recommendedName>
        <fullName evidence="1">Cytochrome b6</fullName>
    </recommendedName>
</protein>
<proteinExistence type="inferred from homology"/>
<accession>A0ZZ65</accession>
<gene>
    <name evidence="1" type="primary">petB</name>
</gene>